<proteinExistence type="inferred from homology"/>
<comment type="function">
    <text evidence="1">Involved in urease metallocenter assembly. Binds nickel. Probably functions as a nickel donor during metallocenter assembly.</text>
</comment>
<comment type="subcellular location">
    <subcellularLocation>
        <location evidence="1">Cytoplasm</location>
    </subcellularLocation>
</comment>
<comment type="similarity">
    <text evidence="1">Belongs to the UreE family.</text>
</comment>
<gene>
    <name evidence="1" type="primary">ureE</name>
    <name type="ordered locus">GK1929</name>
    <name type="ORF">GKB16</name>
</gene>
<reference key="1">
    <citation type="journal article" date="2004" name="Extremophiles">
        <title>Genomic characterization of thermophilic Geobacillus species isolated from the deepest sea mud of the Mariana Trench.</title>
        <authorList>
            <person name="Takami H."/>
            <person name="Nishi S."/>
            <person name="Lu J."/>
            <person name="Shimamura S."/>
            <person name="Takaki Y."/>
        </authorList>
    </citation>
    <scope>NUCLEOTIDE SEQUENCE [GENOMIC DNA]</scope>
    <source>
        <strain>HTA426</strain>
    </source>
</reference>
<reference key="2">
    <citation type="journal article" date="2004" name="Nucleic Acids Res.">
        <title>Thermoadaptation trait revealed by the genome sequence of thermophilic Geobacillus kaustophilus.</title>
        <authorList>
            <person name="Takami H."/>
            <person name="Takaki Y."/>
            <person name="Chee G.-J."/>
            <person name="Nishi S."/>
            <person name="Shimamura S."/>
            <person name="Suzuki H."/>
            <person name="Matsui S."/>
            <person name="Uchiyama I."/>
        </authorList>
    </citation>
    <scope>NUCLEOTIDE SEQUENCE [LARGE SCALE GENOMIC DNA]</scope>
    <source>
        <strain>HTA426</strain>
    </source>
</reference>
<accession>Q75TC2</accession>
<accession>Q5KYM2</accession>
<sequence length="148" mass="17098">MIIETIIGNIQTLPSLPPHIERVYMASDDLVKRIQRVVTDHGRELGIRLKEAKELADGDVLWMDDHNAIVVSVLPEDLLVIKPVSLKQMGEIAHQIGNRHLPAQFEEGEMLVQYDYLVEELLQQLAIPYKREKRKVKQAFRHIGHRHD</sequence>
<feature type="chain" id="PRO_0000223415" description="Urease accessory protein UreE">
    <location>
        <begin position="1"/>
        <end position="148"/>
    </location>
</feature>
<organism>
    <name type="scientific">Geobacillus kaustophilus (strain HTA426)</name>
    <dbReference type="NCBI Taxonomy" id="235909"/>
    <lineage>
        <taxon>Bacteria</taxon>
        <taxon>Bacillati</taxon>
        <taxon>Bacillota</taxon>
        <taxon>Bacilli</taxon>
        <taxon>Bacillales</taxon>
        <taxon>Anoxybacillaceae</taxon>
        <taxon>Geobacillus</taxon>
        <taxon>Geobacillus thermoleovorans group</taxon>
    </lineage>
</organism>
<keyword id="KW-0143">Chaperone</keyword>
<keyword id="KW-0963">Cytoplasm</keyword>
<keyword id="KW-0533">Nickel</keyword>
<keyword id="KW-0996">Nickel insertion</keyword>
<keyword id="KW-1185">Reference proteome</keyword>
<protein>
    <recommendedName>
        <fullName evidence="1">Urease accessory protein UreE</fullName>
    </recommendedName>
</protein>
<evidence type="ECO:0000255" key="1">
    <source>
        <dbReference type="HAMAP-Rule" id="MF_00822"/>
    </source>
</evidence>
<name>UREE_GEOKA</name>
<dbReference type="EMBL" id="AB126619">
    <property type="protein sequence ID" value="BAD18356.1"/>
    <property type="molecule type" value="Genomic_DNA"/>
</dbReference>
<dbReference type="EMBL" id="BA000043">
    <property type="protein sequence ID" value="BAD76214.1"/>
    <property type="molecule type" value="Genomic_DNA"/>
</dbReference>
<dbReference type="RefSeq" id="WP_011231415.1">
    <property type="nucleotide sequence ID" value="NC_006510.1"/>
</dbReference>
<dbReference type="SMR" id="Q75TC2"/>
<dbReference type="STRING" id="235909.GK1929"/>
<dbReference type="KEGG" id="gka:GK1929"/>
<dbReference type="PATRIC" id="fig|235909.7.peg.2070"/>
<dbReference type="eggNOG" id="COG2371">
    <property type="taxonomic scope" value="Bacteria"/>
</dbReference>
<dbReference type="HOGENOM" id="CLU_093757_3_1_9"/>
<dbReference type="Proteomes" id="UP000001172">
    <property type="component" value="Chromosome"/>
</dbReference>
<dbReference type="GO" id="GO:0005737">
    <property type="term" value="C:cytoplasm"/>
    <property type="evidence" value="ECO:0007669"/>
    <property type="project" value="UniProtKB-SubCell"/>
</dbReference>
<dbReference type="GO" id="GO:0016151">
    <property type="term" value="F:nickel cation binding"/>
    <property type="evidence" value="ECO:0007669"/>
    <property type="project" value="UniProtKB-UniRule"/>
</dbReference>
<dbReference type="GO" id="GO:0051082">
    <property type="term" value="F:unfolded protein binding"/>
    <property type="evidence" value="ECO:0007669"/>
    <property type="project" value="UniProtKB-UniRule"/>
</dbReference>
<dbReference type="GO" id="GO:0006457">
    <property type="term" value="P:protein folding"/>
    <property type="evidence" value="ECO:0007669"/>
    <property type="project" value="InterPro"/>
</dbReference>
<dbReference type="GO" id="GO:0065003">
    <property type="term" value="P:protein-containing complex assembly"/>
    <property type="evidence" value="ECO:0007669"/>
    <property type="project" value="InterPro"/>
</dbReference>
<dbReference type="GO" id="GO:0019627">
    <property type="term" value="P:urea metabolic process"/>
    <property type="evidence" value="ECO:0007669"/>
    <property type="project" value="InterPro"/>
</dbReference>
<dbReference type="CDD" id="cd00571">
    <property type="entry name" value="UreE"/>
    <property type="match status" value="1"/>
</dbReference>
<dbReference type="Gene3D" id="2.60.260.20">
    <property type="entry name" value="Urease metallochaperone UreE, N-terminal domain"/>
    <property type="match status" value="1"/>
</dbReference>
<dbReference type="Gene3D" id="3.30.70.790">
    <property type="entry name" value="UreE, C-terminal domain"/>
    <property type="match status" value="1"/>
</dbReference>
<dbReference type="HAMAP" id="MF_00822">
    <property type="entry name" value="UreE"/>
    <property type="match status" value="1"/>
</dbReference>
<dbReference type="InterPro" id="IPR012406">
    <property type="entry name" value="UreE"/>
</dbReference>
<dbReference type="InterPro" id="IPR007864">
    <property type="entry name" value="UreE_C_dom"/>
</dbReference>
<dbReference type="InterPro" id="IPR004029">
    <property type="entry name" value="UreE_N"/>
</dbReference>
<dbReference type="InterPro" id="IPR036118">
    <property type="entry name" value="UreE_N_sf"/>
</dbReference>
<dbReference type="NCBIfam" id="NF009755">
    <property type="entry name" value="PRK13261.2-1"/>
    <property type="match status" value="1"/>
</dbReference>
<dbReference type="Pfam" id="PF05194">
    <property type="entry name" value="UreE_C"/>
    <property type="match status" value="1"/>
</dbReference>
<dbReference type="Pfam" id="PF02814">
    <property type="entry name" value="UreE_N"/>
    <property type="match status" value="1"/>
</dbReference>
<dbReference type="PIRSF" id="PIRSF036402">
    <property type="entry name" value="Ureas_acces_UreE"/>
    <property type="match status" value="1"/>
</dbReference>
<dbReference type="SMART" id="SM00988">
    <property type="entry name" value="UreE_N"/>
    <property type="match status" value="1"/>
</dbReference>
<dbReference type="SUPFAM" id="SSF69737">
    <property type="entry name" value="Urease metallochaperone UreE, C-terminal domain"/>
    <property type="match status" value="1"/>
</dbReference>
<dbReference type="SUPFAM" id="SSF69287">
    <property type="entry name" value="Urease metallochaperone UreE, N-terminal domain"/>
    <property type="match status" value="1"/>
</dbReference>